<dbReference type="EMBL" id="AP009256">
    <property type="protein sequence ID" value="BAF39102.1"/>
    <property type="molecule type" value="Genomic_DNA"/>
</dbReference>
<dbReference type="RefSeq" id="WP_003808016.1">
    <property type="nucleotide sequence ID" value="NZ_CAXVNC010000001.1"/>
</dbReference>
<dbReference type="SMR" id="A1A069"/>
<dbReference type="STRING" id="367928.BAD_0321"/>
<dbReference type="PaxDb" id="1680-BADO_0328"/>
<dbReference type="GeneID" id="4556672"/>
<dbReference type="KEGG" id="bad:BAD_0321"/>
<dbReference type="HOGENOM" id="CLU_044142_4_1_11"/>
<dbReference type="Proteomes" id="UP000008702">
    <property type="component" value="Chromosome"/>
</dbReference>
<dbReference type="GO" id="GO:0022625">
    <property type="term" value="C:cytosolic large ribosomal subunit"/>
    <property type="evidence" value="ECO:0007669"/>
    <property type="project" value="TreeGrafter"/>
</dbReference>
<dbReference type="GO" id="GO:0019843">
    <property type="term" value="F:rRNA binding"/>
    <property type="evidence" value="ECO:0007669"/>
    <property type="project" value="UniProtKB-UniRule"/>
</dbReference>
<dbReference type="GO" id="GO:0003735">
    <property type="term" value="F:structural constituent of ribosome"/>
    <property type="evidence" value="ECO:0007669"/>
    <property type="project" value="InterPro"/>
</dbReference>
<dbReference type="GO" id="GO:0006412">
    <property type="term" value="P:translation"/>
    <property type="evidence" value="ECO:0007669"/>
    <property type="project" value="UniProtKB-UniRule"/>
</dbReference>
<dbReference type="FunFam" id="2.40.30.10:FF:000004">
    <property type="entry name" value="50S ribosomal protein L3"/>
    <property type="match status" value="1"/>
</dbReference>
<dbReference type="FunFam" id="3.30.160.810:FF:000001">
    <property type="entry name" value="50S ribosomal protein L3"/>
    <property type="match status" value="1"/>
</dbReference>
<dbReference type="Gene3D" id="3.30.160.810">
    <property type="match status" value="1"/>
</dbReference>
<dbReference type="Gene3D" id="2.40.30.10">
    <property type="entry name" value="Translation factors"/>
    <property type="match status" value="1"/>
</dbReference>
<dbReference type="HAMAP" id="MF_01325_B">
    <property type="entry name" value="Ribosomal_uL3_B"/>
    <property type="match status" value="1"/>
</dbReference>
<dbReference type="InterPro" id="IPR000597">
    <property type="entry name" value="Ribosomal_uL3"/>
</dbReference>
<dbReference type="InterPro" id="IPR019927">
    <property type="entry name" value="Ribosomal_uL3_bac/org-type"/>
</dbReference>
<dbReference type="InterPro" id="IPR019926">
    <property type="entry name" value="Ribosomal_uL3_CS"/>
</dbReference>
<dbReference type="InterPro" id="IPR009000">
    <property type="entry name" value="Transl_B-barrel_sf"/>
</dbReference>
<dbReference type="NCBIfam" id="TIGR03625">
    <property type="entry name" value="L3_bact"/>
    <property type="match status" value="1"/>
</dbReference>
<dbReference type="PANTHER" id="PTHR11229">
    <property type="entry name" value="50S RIBOSOMAL PROTEIN L3"/>
    <property type="match status" value="1"/>
</dbReference>
<dbReference type="PANTHER" id="PTHR11229:SF16">
    <property type="entry name" value="LARGE RIBOSOMAL SUBUNIT PROTEIN UL3C"/>
    <property type="match status" value="1"/>
</dbReference>
<dbReference type="Pfam" id="PF00297">
    <property type="entry name" value="Ribosomal_L3"/>
    <property type="match status" value="1"/>
</dbReference>
<dbReference type="SUPFAM" id="SSF50447">
    <property type="entry name" value="Translation proteins"/>
    <property type="match status" value="1"/>
</dbReference>
<dbReference type="PROSITE" id="PS00474">
    <property type="entry name" value="RIBOSOMAL_L3"/>
    <property type="match status" value="1"/>
</dbReference>
<name>RL3_BIFAA</name>
<proteinExistence type="inferred from homology"/>
<feature type="chain" id="PRO_1000052013" description="Large ribosomal subunit protein uL3">
    <location>
        <begin position="1"/>
        <end position="213"/>
    </location>
</feature>
<evidence type="ECO:0000255" key="1">
    <source>
        <dbReference type="HAMAP-Rule" id="MF_01325"/>
    </source>
</evidence>
<evidence type="ECO:0000305" key="2"/>
<reference key="1">
    <citation type="submission" date="2006-12" db="EMBL/GenBank/DDBJ databases">
        <title>Bifidobacterium adolescentis complete genome sequence.</title>
        <authorList>
            <person name="Suzuki T."/>
            <person name="Tsuda Y."/>
            <person name="Kanou N."/>
            <person name="Inoue T."/>
            <person name="Kumazaki K."/>
            <person name="Nagano S."/>
            <person name="Hirai S."/>
            <person name="Tanaka K."/>
            <person name="Watanabe K."/>
        </authorList>
    </citation>
    <scope>NUCLEOTIDE SEQUENCE [LARGE SCALE GENOMIC DNA]</scope>
    <source>
        <strain>ATCC 15703 / DSM 20083 / NCTC 11814 / E194a</strain>
    </source>
</reference>
<organism>
    <name type="scientific">Bifidobacterium adolescentis (strain ATCC 15703 / DSM 20083 / NCTC 11814 / E194a)</name>
    <dbReference type="NCBI Taxonomy" id="367928"/>
    <lineage>
        <taxon>Bacteria</taxon>
        <taxon>Bacillati</taxon>
        <taxon>Actinomycetota</taxon>
        <taxon>Actinomycetes</taxon>
        <taxon>Bifidobacteriales</taxon>
        <taxon>Bifidobacteriaceae</taxon>
        <taxon>Bifidobacterium</taxon>
    </lineage>
</organism>
<sequence>MSNRTALLGKKLGMSQVWDENGFFVPVTLVDVSTNVVTAVKSEESDGYKAVQLGYGQVDPTKVTKPLAGHFAKAGVTPRRHLAEVRTDNAEEFEPGQELTAELFPEGTLVDVTGTTKGKGFAGTIKRWGFKSYRRTHGSHKNERRPGSVGACATPSRILKGKRMAGRMGHVTNTALNLTIVSSDVENGVLAIKGAIPGPKGSIVLVRSAVKGA</sequence>
<comment type="function">
    <text evidence="1">One of the primary rRNA binding proteins, it binds directly near the 3'-end of the 23S rRNA, where it nucleates assembly of the 50S subunit.</text>
</comment>
<comment type="subunit">
    <text evidence="1">Part of the 50S ribosomal subunit. Forms a cluster with proteins L14 and L19.</text>
</comment>
<comment type="similarity">
    <text evidence="1">Belongs to the universal ribosomal protein uL3 family.</text>
</comment>
<gene>
    <name evidence="1" type="primary">rplC</name>
    <name type="ordered locus">BAD_0321</name>
</gene>
<keyword id="KW-1185">Reference proteome</keyword>
<keyword id="KW-0687">Ribonucleoprotein</keyword>
<keyword id="KW-0689">Ribosomal protein</keyword>
<keyword id="KW-0694">RNA-binding</keyword>
<keyword id="KW-0699">rRNA-binding</keyword>
<accession>A1A069</accession>
<protein>
    <recommendedName>
        <fullName evidence="1">Large ribosomal subunit protein uL3</fullName>
    </recommendedName>
    <alternativeName>
        <fullName evidence="2">50S ribosomal protein L3</fullName>
    </alternativeName>
</protein>